<evidence type="ECO:0000255" key="1">
    <source>
        <dbReference type="HAMAP-Rule" id="MF_00377"/>
    </source>
</evidence>
<keyword id="KW-0067">ATP-binding</keyword>
<keyword id="KW-0963">Cytoplasm</keyword>
<keyword id="KW-0235">DNA replication</keyword>
<keyword id="KW-0238">DNA-binding</keyword>
<keyword id="KW-0446">Lipid-binding</keyword>
<keyword id="KW-0547">Nucleotide-binding</keyword>
<accession>Q0BPB6</accession>
<name>DNAA_FRATO</name>
<proteinExistence type="inferred from homology"/>
<organism>
    <name type="scientific">Francisella tularensis subsp. holarctica (strain OSU18)</name>
    <dbReference type="NCBI Taxonomy" id="393011"/>
    <lineage>
        <taxon>Bacteria</taxon>
        <taxon>Pseudomonadati</taxon>
        <taxon>Pseudomonadota</taxon>
        <taxon>Gammaproteobacteria</taxon>
        <taxon>Thiotrichales</taxon>
        <taxon>Francisellaceae</taxon>
        <taxon>Francisella</taxon>
    </lineage>
</organism>
<sequence length="491" mass="55799">MTTWDKCLKKIKKNLSTFEYKTWIKPIHVEQNSNLFTVYCNNEYFKKHIKSKYGNLILSTIQECHGNDLIIEYSNKKFSGEKITEVITAGPQANFFSTTSVEIKDESEDTKVVQEPKISNKSNSKDFSSSQELFGFDEAMLITAKEDEEYSFGLPLKEKYVFDSFVVGDANKIARAAAMQVSINPGKLHNPLFIYGGSGLGKTHLMQAIGNHAREVNPNAKIIYTNSEQFIKDYVNSIRLQDQDEFQRVYRSADILLIDDIQFIAGKEGTAQEFFHTFNALYENGKQIILTSDKYPNEIEGLEERLVSRFGYGLTVSVDMPDLETRIAILLKKAHDLGQKLPNETAAFIAENVRTNVRELEGALNRVLTTSKFNHKDPTIEVAQACLRDVIKIQEKKVKIDNIQKVVADFYRIRVKDLTSNQRSRNIARPRQIAMSLARELTSHSLPEIGNAFGGRDHTTVMHAVKAITKLRQSNTSISDDYELLLDKISR</sequence>
<comment type="function">
    <text evidence="1">Plays an essential role in the initiation and regulation of chromosomal replication. ATP-DnaA binds to the origin of replication (oriC) to initiate formation of the DNA replication initiation complex once per cell cycle. Binds the DnaA box (a 9 base pair repeat at the origin) and separates the double-stranded (ds)DNA. Forms a right-handed helical filament on oriC DNA; dsDNA binds to the exterior of the filament while single-stranded (ss)DNA is stabiized in the filament's interior. The ATP-DnaA-oriC complex binds and stabilizes one strand of the AT-rich DNA unwinding element (DUE), permitting loading of DNA polymerase. After initiation quickly degrades to an ADP-DnaA complex that is not apt for DNA replication. Binds acidic phospholipids.</text>
</comment>
<comment type="subunit">
    <text evidence="1">Oligomerizes as a right-handed, spiral filament on DNA at oriC.</text>
</comment>
<comment type="subcellular location">
    <subcellularLocation>
        <location evidence="1">Cytoplasm</location>
    </subcellularLocation>
</comment>
<comment type="domain">
    <text evidence="1">Domain I is involved in oligomerization and binding regulators, domain II is flexibile and of varying length in different bacteria, domain III forms the AAA+ region, while domain IV binds dsDNA.</text>
</comment>
<comment type="similarity">
    <text evidence="1">Belongs to the DnaA family.</text>
</comment>
<reference key="1">
    <citation type="journal article" date="2006" name="J. Bacteriol.">
        <title>Chromosome rearrangement and diversification of Francisella tularensis revealed by the type B (OSU18) genome sequence.</title>
        <authorList>
            <person name="Petrosino J.F."/>
            <person name="Xiang Q."/>
            <person name="Karpathy S.E."/>
            <person name="Jiang H."/>
            <person name="Yerrapragada S."/>
            <person name="Liu Y."/>
            <person name="Gioia J."/>
            <person name="Hemphill L."/>
            <person name="Gonzalez A."/>
            <person name="Raghavan T.M."/>
            <person name="Uzman A."/>
            <person name="Fox G.E."/>
            <person name="Highlander S."/>
            <person name="Reichard M."/>
            <person name="Morton R.J."/>
            <person name="Clinkenbeard K.D."/>
            <person name="Weinstock G.M."/>
        </authorList>
    </citation>
    <scope>NUCLEOTIDE SEQUENCE [LARGE SCALE GENOMIC DNA]</scope>
    <source>
        <strain>OSU18</strain>
    </source>
</reference>
<gene>
    <name evidence="1" type="primary">dnaA</name>
    <name type="ordered locus">FTH_0001</name>
</gene>
<feature type="chain" id="PRO_1000048647" description="Chromosomal replication initiator protein DnaA">
    <location>
        <begin position="1"/>
        <end position="491"/>
    </location>
</feature>
<feature type="region of interest" description="Domain I, interacts with DnaA modulators" evidence="1">
    <location>
        <begin position="1"/>
        <end position="69"/>
    </location>
</feature>
<feature type="region of interest" description="Domain II" evidence="1">
    <location>
        <begin position="69"/>
        <end position="154"/>
    </location>
</feature>
<feature type="region of interest" description="Domain III, AAA+ region" evidence="1">
    <location>
        <begin position="155"/>
        <end position="371"/>
    </location>
</feature>
<feature type="region of interest" description="Domain IV, binds dsDNA" evidence="1">
    <location>
        <begin position="372"/>
        <end position="491"/>
    </location>
</feature>
<feature type="binding site" evidence="1">
    <location>
        <position position="199"/>
    </location>
    <ligand>
        <name>ATP</name>
        <dbReference type="ChEBI" id="CHEBI:30616"/>
    </ligand>
</feature>
<feature type="binding site" evidence="1">
    <location>
        <position position="201"/>
    </location>
    <ligand>
        <name>ATP</name>
        <dbReference type="ChEBI" id="CHEBI:30616"/>
    </ligand>
</feature>
<feature type="binding site" evidence="1">
    <location>
        <position position="202"/>
    </location>
    <ligand>
        <name>ATP</name>
        <dbReference type="ChEBI" id="CHEBI:30616"/>
    </ligand>
</feature>
<feature type="binding site" evidence="1">
    <location>
        <position position="203"/>
    </location>
    <ligand>
        <name>ATP</name>
        <dbReference type="ChEBI" id="CHEBI:30616"/>
    </ligand>
</feature>
<protein>
    <recommendedName>
        <fullName evidence="1">Chromosomal replication initiator protein DnaA</fullName>
    </recommendedName>
</protein>
<dbReference type="EMBL" id="CP000437">
    <property type="protein sequence ID" value="ABI82068.1"/>
    <property type="molecule type" value="Genomic_DNA"/>
</dbReference>
<dbReference type="RefSeq" id="WP_011648534.1">
    <property type="nucleotide sequence ID" value="NC_017463.1"/>
</dbReference>
<dbReference type="SMR" id="Q0BPB6"/>
<dbReference type="KEGG" id="fth:FTH_0001"/>
<dbReference type="GO" id="GO:0005737">
    <property type="term" value="C:cytoplasm"/>
    <property type="evidence" value="ECO:0007669"/>
    <property type="project" value="UniProtKB-SubCell"/>
</dbReference>
<dbReference type="GO" id="GO:0005886">
    <property type="term" value="C:plasma membrane"/>
    <property type="evidence" value="ECO:0007669"/>
    <property type="project" value="TreeGrafter"/>
</dbReference>
<dbReference type="GO" id="GO:0005524">
    <property type="term" value="F:ATP binding"/>
    <property type="evidence" value="ECO:0007669"/>
    <property type="project" value="UniProtKB-UniRule"/>
</dbReference>
<dbReference type="GO" id="GO:0016887">
    <property type="term" value="F:ATP hydrolysis activity"/>
    <property type="evidence" value="ECO:0007669"/>
    <property type="project" value="InterPro"/>
</dbReference>
<dbReference type="GO" id="GO:0003688">
    <property type="term" value="F:DNA replication origin binding"/>
    <property type="evidence" value="ECO:0007669"/>
    <property type="project" value="UniProtKB-UniRule"/>
</dbReference>
<dbReference type="GO" id="GO:0008289">
    <property type="term" value="F:lipid binding"/>
    <property type="evidence" value="ECO:0007669"/>
    <property type="project" value="UniProtKB-KW"/>
</dbReference>
<dbReference type="GO" id="GO:0006270">
    <property type="term" value="P:DNA replication initiation"/>
    <property type="evidence" value="ECO:0007669"/>
    <property type="project" value="UniProtKB-UniRule"/>
</dbReference>
<dbReference type="GO" id="GO:0006275">
    <property type="term" value="P:regulation of DNA replication"/>
    <property type="evidence" value="ECO:0007669"/>
    <property type="project" value="UniProtKB-UniRule"/>
</dbReference>
<dbReference type="CDD" id="cd00009">
    <property type="entry name" value="AAA"/>
    <property type="match status" value="1"/>
</dbReference>
<dbReference type="CDD" id="cd06571">
    <property type="entry name" value="Bac_DnaA_C"/>
    <property type="match status" value="1"/>
</dbReference>
<dbReference type="FunFam" id="3.40.50.300:FF:000668">
    <property type="entry name" value="Chromosomal replication initiator protein DnaA"/>
    <property type="match status" value="1"/>
</dbReference>
<dbReference type="Gene3D" id="1.10.1750.10">
    <property type="match status" value="1"/>
</dbReference>
<dbReference type="Gene3D" id="1.10.8.60">
    <property type="match status" value="1"/>
</dbReference>
<dbReference type="Gene3D" id="3.30.300.180">
    <property type="match status" value="1"/>
</dbReference>
<dbReference type="Gene3D" id="3.40.50.300">
    <property type="entry name" value="P-loop containing nucleotide triphosphate hydrolases"/>
    <property type="match status" value="1"/>
</dbReference>
<dbReference type="HAMAP" id="MF_00377">
    <property type="entry name" value="DnaA_bact"/>
    <property type="match status" value="1"/>
</dbReference>
<dbReference type="InterPro" id="IPR003593">
    <property type="entry name" value="AAA+_ATPase"/>
</dbReference>
<dbReference type="InterPro" id="IPR001957">
    <property type="entry name" value="Chromosome_initiator_DnaA"/>
</dbReference>
<dbReference type="InterPro" id="IPR020591">
    <property type="entry name" value="Chromosome_initiator_DnaA-like"/>
</dbReference>
<dbReference type="InterPro" id="IPR018312">
    <property type="entry name" value="Chromosome_initiator_DnaA_CS"/>
</dbReference>
<dbReference type="InterPro" id="IPR013159">
    <property type="entry name" value="DnaA_C"/>
</dbReference>
<dbReference type="InterPro" id="IPR013317">
    <property type="entry name" value="DnaA_dom"/>
</dbReference>
<dbReference type="InterPro" id="IPR024633">
    <property type="entry name" value="DnaA_N_dom"/>
</dbReference>
<dbReference type="InterPro" id="IPR038454">
    <property type="entry name" value="DnaA_N_sf"/>
</dbReference>
<dbReference type="InterPro" id="IPR027417">
    <property type="entry name" value="P-loop_NTPase"/>
</dbReference>
<dbReference type="InterPro" id="IPR010921">
    <property type="entry name" value="Trp_repressor/repl_initiator"/>
</dbReference>
<dbReference type="NCBIfam" id="TIGR00362">
    <property type="entry name" value="DnaA"/>
    <property type="match status" value="1"/>
</dbReference>
<dbReference type="PANTHER" id="PTHR30050">
    <property type="entry name" value="CHROMOSOMAL REPLICATION INITIATOR PROTEIN DNAA"/>
    <property type="match status" value="1"/>
</dbReference>
<dbReference type="PANTHER" id="PTHR30050:SF2">
    <property type="entry name" value="CHROMOSOMAL REPLICATION INITIATOR PROTEIN DNAA"/>
    <property type="match status" value="1"/>
</dbReference>
<dbReference type="Pfam" id="PF00308">
    <property type="entry name" value="Bac_DnaA"/>
    <property type="match status" value="1"/>
</dbReference>
<dbReference type="Pfam" id="PF08299">
    <property type="entry name" value="Bac_DnaA_C"/>
    <property type="match status" value="1"/>
</dbReference>
<dbReference type="Pfam" id="PF11638">
    <property type="entry name" value="DnaA_N"/>
    <property type="match status" value="1"/>
</dbReference>
<dbReference type="PRINTS" id="PR00051">
    <property type="entry name" value="DNAA"/>
</dbReference>
<dbReference type="SMART" id="SM00382">
    <property type="entry name" value="AAA"/>
    <property type="match status" value="1"/>
</dbReference>
<dbReference type="SMART" id="SM00760">
    <property type="entry name" value="Bac_DnaA_C"/>
    <property type="match status" value="1"/>
</dbReference>
<dbReference type="SUPFAM" id="SSF52540">
    <property type="entry name" value="P-loop containing nucleoside triphosphate hydrolases"/>
    <property type="match status" value="1"/>
</dbReference>
<dbReference type="SUPFAM" id="SSF48295">
    <property type="entry name" value="TrpR-like"/>
    <property type="match status" value="1"/>
</dbReference>
<dbReference type="PROSITE" id="PS01008">
    <property type="entry name" value="DNAA"/>
    <property type="match status" value="1"/>
</dbReference>